<comment type="function">
    <text evidence="1">This protein is an aporepressor. When complexed with L-tryptophan it binds the operator region of the trp operon (5'-ACTAGT-'3') and prevents the initiation of transcription. The complex also regulates trp repressor biosynthesis by binding to its regulatory region.</text>
</comment>
<comment type="subunit">
    <text evidence="1">Homodimer.</text>
</comment>
<comment type="subcellular location">
    <subcellularLocation>
        <location evidence="1">Cytoplasm</location>
    </subcellularLocation>
</comment>
<comment type="similarity">
    <text evidence="1">Belongs to the TrpR family.</text>
</comment>
<evidence type="ECO:0000255" key="1">
    <source>
        <dbReference type="HAMAP-Rule" id="MF_00475"/>
    </source>
</evidence>
<organism>
    <name type="scientific">Sodalis glossinidius (strain morsitans)</name>
    <dbReference type="NCBI Taxonomy" id="343509"/>
    <lineage>
        <taxon>Bacteria</taxon>
        <taxon>Pseudomonadati</taxon>
        <taxon>Pseudomonadota</taxon>
        <taxon>Gammaproteobacteria</taxon>
        <taxon>Enterobacterales</taxon>
        <taxon>Bruguierivoracaceae</taxon>
        <taxon>Sodalis</taxon>
    </lineage>
</organism>
<feature type="chain" id="PRO_1000014052" description="Trp operon repressor">
    <location>
        <begin position="1"/>
        <end position="109"/>
    </location>
</feature>
<feature type="DNA-binding region" evidence="1">
    <location>
        <begin position="68"/>
        <end position="91"/>
    </location>
</feature>
<name>TRPR_SODGM</name>
<dbReference type="EMBL" id="AP008232">
    <property type="protein sequence ID" value="BAE73676.1"/>
    <property type="molecule type" value="Genomic_DNA"/>
</dbReference>
<dbReference type="RefSeq" id="WP_011410264.1">
    <property type="nucleotide sequence ID" value="NC_007712.1"/>
</dbReference>
<dbReference type="SMR" id="Q2NVZ9"/>
<dbReference type="STRING" id="343509.SG0401"/>
<dbReference type="KEGG" id="sgl:SG0401"/>
<dbReference type="eggNOG" id="COG2973">
    <property type="taxonomic scope" value="Bacteria"/>
</dbReference>
<dbReference type="HOGENOM" id="CLU_147939_0_0_6"/>
<dbReference type="OrthoDB" id="5704033at2"/>
<dbReference type="BioCyc" id="SGLO343509:SGP1_RS03715-MONOMER"/>
<dbReference type="Proteomes" id="UP000001932">
    <property type="component" value="Chromosome"/>
</dbReference>
<dbReference type="GO" id="GO:0005737">
    <property type="term" value="C:cytoplasm"/>
    <property type="evidence" value="ECO:0007669"/>
    <property type="project" value="UniProtKB-SubCell"/>
</dbReference>
<dbReference type="GO" id="GO:0003700">
    <property type="term" value="F:DNA-binding transcription factor activity"/>
    <property type="evidence" value="ECO:0007669"/>
    <property type="project" value="InterPro"/>
</dbReference>
<dbReference type="GO" id="GO:0043565">
    <property type="term" value="F:sequence-specific DNA binding"/>
    <property type="evidence" value="ECO:0007669"/>
    <property type="project" value="InterPro"/>
</dbReference>
<dbReference type="GO" id="GO:0045892">
    <property type="term" value="P:negative regulation of DNA-templated transcription"/>
    <property type="evidence" value="ECO:0007669"/>
    <property type="project" value="UniProtKB-UniRule"/>
</dbReference>
<dbReference type="FunFam" id="1.10.1270.10:FF:000001">
    <property type="entry name" value="Trp operon repressor"/>
    <property type="match status" value="1"/>
</dbReference>
<dbReference type="Gene3D" id="1.10.1270.10">
    <property type="entry name" value="TrpR-like"/>
    <property type="match status" value="1"/>
</dbReference>
<dbReference type="HAMAP" id="MF_00475">
    <property type="entry name" value="Trp_repressor"/>
    <property type="match status" value="1"/>
</dbReference>
<dbReference type="InterPro" id="IPR000831">
    <property type="entry name" value="Trp_repress"/>
</dbReference>
<dbReference type="InterPro" id="IPR013335">
    <property type="entry name" value="Trp_repress_bac"/>
</dbReference>
<dbReference type="InterPro" id="IPR010921">
    <property type="entry name" value="Trp_repressor/repl_initiator"/>
</dbReference>
<dbReference type="InterPro" id="IPR038116">
    <property type="entry name" value="TrpR-like_sf"/>
</dbReference>
<dbReference type="NCBIfam" id="TIGR01321">
    <property type="entry name" value="TrpR"/>
    <property type="match status" value="1"/>
</dbReference>
<dbReference type="PANTHER" id="PTHR38025">
    <property type="entry name" value="TRP OPERON REPRESSOR"/>
    <property type="match status" value="1"/>
</dbReference>
<dbReference type="PANTHER" id="PTHR38025:SF1">
    <property type="entry name" value="TRP OPERON REPRESSOR"/>
    <property type="match status" value="1"/>
</dbReference>
<dbReference type="Pfam" id="PF01371">
    <property type="entry name" value="Trp_repressor"/>
    <property type="match status" value="1"/>
</dbReference>
<dbReference type="PIRSF" id="PIRSF003196">
    <property type="entry name" value="Trp_repressor"/>
    <property type="match status" value="1"/>
</dbReference>
<dbReference type="SUPFAM" id="SSF48295">
    <property type="entry name" value="TrpR-like"/>
    <property type="match status" value="1"/>
</dbReference>
<protein>
    <recommendedName>
        <fullName evidence="1">Trp operon repressor</fullName>
    </recommendedName>
</protein>
<gene>
    <name evidence="1" type="primary">trpR</name>
    <name type="ordered locus">SG0401</name>
</gene>
<proteinExistence type="inferred from homology"/>
<sequence length="109" mass="12120">MNATSSTPGAGAERLEQDWRTFARLLGQAYDDELHVPLLQLMLTPDEREALATRIRIIQALLAGDVSQRELKNELGTGIATITRGSNSLKSAPPELKRWLIQQLRDTPL</sequence>
<reference key="1">
    <citation type="journal article" date="2006" name="Genome Res.">
        <title>Massive genome erosion and functional adaptations provide insights into the symbiotic lifestyle of Sodalis glossinidius in the tsetse host.</title>
        <authorList>
            <person name="Toh H."/>
            <person name="Weiss B.L."/>
            <person name="Perkin S.A.H."/>
            <person name="Yamashita A."/>
            <person name="Oshima K."/>
            <person name="Hattori M."/>
            <person name="Aksoy S."/>
        </authorList>
    </citation>
    <scope>NUCLEOTIDE SEQUENCE [LARGE SCALE GENOMIC DNA]</scope>
    <source>
        <strain>morsitans</strain>
    </source>
</reference>
<keyword id="KW-0963">Cytoplasm</keyword>
<keyword id="KW-0238">DNA-binding</keyword>
<keyword id="KW-0678">Repressor</keyword>
<keyword id="KW-0804">Transcription</keyword>
<keyword id="KW-0805">Transcription regulation</keyword>
<accession>Q2NVZ9</accession>